<organism>
    <name type="scientific">Euglena gracilis</name>
    <dbReference type="NCBI Taxonomy" id="3039"/>
    <lineage>
        <taxon>Eukaryota</taxon>
        <taxon>Discoba</taxon>
        <taxon>Euglenozoa</taxon>
        <taxon>Euglenida</taxon>
        <taxon>Spirocuta</taxon>
        <taxon>Euglenophyceae</taxon>
        <taxon>Euglenales</taxon>
        <taxon>Euglenaceae</taxon>
        <taxon>Euglena</taxon>
    </lineage>
</organism>
<proteinExistence type="inferred from homology"/>
<name>RK22_EUGGR</name>
<dbReference type="EMBL" id="Z11874">
    <property type="protein sequence ID" value="CAA77919.1"/>
    <property type="molecule type" value="Genomic_DNA"/>
</dbReference>
<dbReference type="EMBL" id="M37463">
    <property type="protein sequence ID" value="AAA84226.1"/>
    <property type="status" value="ALT_SEQ"/>
    <property type="molecule type" value="Genomic_DNA"/>
</dbReference>
<dbReference type="EMBL" id="X70810">
    <property type="protein sequence ID" value="CAA50102.1"/>
    <property type="molecule type" value="Genomic_DNA"/>
</dbReference>
<dbReference type="PIR" id="S34890">
    <property type="entry name" value="S34523"/>
</dbReference>
<dbReference type="RefSeq" id="NP_041915.1">
    <property type="nucleotide sequence ID" value="NC_001603.2"/>
</dbReference>
<dbReference type="SMR" id="P19166"/>
<dbReference type="GeneID" id="807508"/>
<dbReference type="GO" id="GO:0009507">
    <property type="term" value="C:chloroplast"/>
    <property type="evidence" value="ECO:0007669"/>
    <property type="project" value="UniProtKB-SubCell"/>
</dbReference>
<dbReference type="GO" id="GO:0015934">
    <property type="term" value="C:large ribosomal subunit"/>
    <property type="evidence" value="ECO:0007669"/>
    <property type="project" value="InterPro"/>
</dbReference>
<dbReference type="GO" id="GO:0019843">
    <property type="term" value="F:rRNA binding"/>
    <property type="evidence" value="ECO:0007669"/>
    <property type="project" value="UniProtKB-UniRule"/>
</dbReference>
<dbReference type="GO" id="GO:0003735">
    <property type="term" value="F:structural constituent of ribosome"/>
    <property type="evidence" value="ECO:0007669"/>
    <property type="project" value="InterPro"/>
</dbReference>
<dbReference type="GO" id="GO:0006412">
    <property type="term" value="P:translation"/>
    <property type="evidence" value="ECO:0007669"/>
    <property type="project" value="UniProtKB-UniRule"/>
</dbReference>
<dbReference type="CDD" id="cd00336">
    <property type="entry name" value="Ribosomal_L22"/>
    <property type="match status" value="1"/>
</dbReference>
<dbReference type="Gene3D" id="3.90.470.10">
    <property type="entry name" value="Ribosomal protein L22/L17"/>
    <property type="match status" value="1"/>
</dbReference>
<dbReference type="HAMAP" id="MF_01331_B">
    <property type="entry name" value="Ribosomal_uL22_B"/>
    <property type="match status" value="1"/>
</dbReference>
<dbReference type="InterPro" id="IPR001063">
    <property type="entry name" value="Ribosomal_uL22"/>
</dbReference>
<dbReference type="InterPro" id="IPR005727">
    <property type="entry name" value="Ribosomal_uL22_bac/chlpt-type"/>
</dbReference>
<dbReference type="InterPro" id="IPR047867">
    <property type="entry name" value="Ribosomal_uL22_bac/org-type"/>
</dbReference>
<dbReference type="InterPro" id="IPR018260">
    <property type="entry name" value="Ribosomal_uL22_CS"/>
</dbReference>
<dbReference type="InterPro" id="IPR036394">
    <property type="entry name" value="Ribosomal_uL22_sf"/>
</dbReference>
<dbReference type="NCBIfam" id="TIGR01044">
    <property type="entry name" value="rplV_bact"/>
    <property type="match status" value="1"/>
</dbReference>
<dbReference type="PANTHER" id="PTHR13501">
    <property type="entry name" value="CHLOROPLAST 50S RIBOSOMAL PROTEIN L22-RELATED"/>
    <property type="match status" value="1"/>
</dbReference>
<dbReference type="PANTHER" id="PTHR13501:SF8">
    <property type="entry name" value="LARGE RIBOSOMAL SUBUNIT PROTEIN UL22M"/>
    <property type="match status" value="1"/>
</dbReference>
<dbReference type="Pfam" id="PF00237">
    <property type="entry name" value="Ribosomal_L22"/>
    <property type="match status" value="1"/>
</dbReference>
<dbReference type="SUPFAM" id="SSF54843">
    <property type="entry name" value="Ribosomal protein L22"/>
    <property type="match status" value="1"/>
</dbReference>
<dbReference type="PROSITE" id="PS00464">
    <property type="entry name" value="RIBOSOMAL_L22"/>
    <property type="match status" value="1"/>
</dbReference>
<accession>P19166</accession>
<sequence>MEQKKPLESSASIKYVRISPFKVRRILNQIKGRSAKEALMILKFMPYKPSTLIFKLLKSAVSNSIKNYDEDANVLRVLEARADAGPILKRLCPHAQGRGFPIKKRTCHITIKLSIL</sequence>
<geneLocation type="chloroplast"/>
<gene>
    <name type="primary">rpl22</name>
</gene>
<protein>
    <recommendedName>
        <fullName evidence="2">Large ribosomal subunit protein uL22c</fullName>
    </recommendedName>
    <alternativeName>
        <fullName>50S ribosomal protein L22, chloroplastic</fullName>
    </alternativeName>
</protein>
<comment type="function">
    <text evidence="1">This protein binds specifically to 23S rRNA.</text>
</comment>
<comment type="function">
    <text evidence="1">The globular domain of the protein is located near the polypeptide exit tunnel on the outside of the subunit, while an extended beta-hairpin is found that lines the wall of the exit tunnel in the center of the 70S ribosome.</text>
</comment>
<comment type="subunit">
    <text>Part of the 50S ribosomal subunit.</text>
</comment>
<comment type="subcellular location">
    <subcellularLocation>
        <location>Plastid</location>
        <location>Chloroplast</location>
    </subcellularLocation>
</comment>
<comment type="similarity">
    <text evidence="2">Belongs to the universal ribosomal protein uL22 family.</text>
</comment>
<feature type="chain" id="PRO_0000125303" description="Large ribosomal subunit protein uL22c">
    <location>
        <begin position="1"/>
        <end position="116"/>
    </location>
</feature>
<keyword id="KW-0150">Chloroplast</keyword>
<keyword id="KW-0934">Plastid</keyword>
<keyword id="KW-0687">Ribonucleoprotein</keyword>
<keyword id="KW-0689">Ribosomal protein</keyword>
<keyword id="KW-0694">RNA-binding</keyword>
<keyword id="KW-0699">rRNA-binding</keyword>
<evidence type="ECO:0000250" key="1"/>
<evidence type="ECO:0000305" key="2"/>
<reference key="1">
    <citation type="journal article" date="1988" name="Curr. Genet.">
        <title>Organization of ribosomal protein genes rpl23, rpl2, rps19, rpl22 and rps3 on the Euglena gracilis chloroplast genome.</title>
        <authorList>
            <person name="Christopher D.A."/>
            <person name="Cushman J.C."/>
            <person name="Price C.A."/>
            <person name="Hallick R.B."/>
        </authorList>
    </citation>
    <scope>NUCLEOTIDE SEQUENCE [GENOMIC DNA]</scope>
    <source>
        <strain>Z / UTEX 753</strain>
    </source>
</reference>
<reference key="2">
    <citation type="journal article" date="1993" name="Nucleic Acids Res.">
        <title>Complete sequence of Euglena gracilis chloroplast DNA.</title>
        <authorList>
            <person name="Hallick R.B."/>
            <person name="Hong L."/>
            <person name="Drager R.G."/>
            <person name="Favreau M.R."/>
            <person name="Monfort A."/>
            <person name="Orsat B."/>
            <person name="Spielmann A."/>
            <person name="Stutz E."/>
        </authorList>
    </citation>
    <scope>NUCLEOTIDE SEQUENCE [LARGE SCALE GENOMIC DNA]</scope>
    <source>
        <strain>Z / UTEX 753</strain>
    </source>
</reference>